<organism>
    <name type="scientific">Staphylococcus aureus (strain MRSA252)</name>
    <dbReference type="NCBI Taxonomy" id="282458"/>
    <lineage>
        <taxon>Bacteria</taxon>
        <taxon>Bacillati</taxon>
        <taxon>Bacillota</taxon>
        <taxon>Bacilli</taxon>
        <taxon>Bacillales</taxon>
        <taxon>Staphylococcaceae</taxon>
        <taxon>Staphylococcus</taxon>
    </lineage>
</organism>
<accession>Q6GDD8</accession>
<reference key="1">
    <citation type="journal article" date="2004" name="Proc. Natl. Acad. Sci. U.S.A.">
        <title>Complete genomes of two clinical Staphylococcus aureus strains: evidence for the rapid evolution of virulence and drug resistance.</title>
        <authorList>
            <person name="Holden M.T.G."/>
            <person name="Feil E.J."/>
            <person name="Lindsay J.A."/>
            <person name="Peacock S.J."/>
            <person name="Day N.P.J."/>
            <person name="Enright M.C."/>
            <person name="Foster T.J."/>
            <person name="Moore C.E."/>
            <person name="Hurst L."/>
            <person name="Atkin R."/>
            <person name="Barron A."/>
            <person name="Bason N."/>
            <person name="Bentley S.D."/>
            <person name="Chillingworth C."/>
            <person name="Chillingworth T."/>
            <person name="Churcher C."/>
            <person name="Clark L."/>
            <person name="Corton C."/>
            <person name="Cronin A."/>
            <person name="Doggett J."/>
            <person name="Dowd L."/>
            <person name="Feltwell T."/>
            <person name="Hance Z."/>
            <person name="Harris B."/>
            <person name="Hauser H."/>
            <person name="Holroyd S."/>
            <person name="Jagels K."/>
            <person name="James K.D."/>
            <person name="Lennard N."/>
            <person name="Line A."/>
            <person name="Mayes R."/>
            <person name="Moule S."/>
            <person name="Mungall K."/>
            <person name="Ormond D."/>
            <person name="Quail M.A."/>
            <person name="Rabbinowitsch E."/>
            <person name="Rutherford K.M."/>
            <person name="Sanders M."/>
            <person name="Sharp S."/>
            <person name="Simmonds M."/>
            <person name="Stevens K."/>
            <person name="Whitehead S."/>
            <person name="Barrell B.G."/>
            <person name="Spratt B.G."/>
            <person name="Parkhill J."/>
        </authorList>
    </citation>
    <scope>NUCLEOTIDE SEQUENCE [LARGE SCALE GENOMIC DNA]</scope>
    <source>
        <strain>MRSA252</strain>
    </source>
</reference>
<evidence type="ECO:0000250" key="1"/>
<evidence type="ECO:0000255" key="2"/>
<evidence type="ECO:0000305" key="3"/>
<protein>
    <recommendedName>
        <fullName>Poly-beta-1,6-N-acetyl-D-glucosamine synthase</fullName>
        <shortName>PNAG synthase</shortName>
        <shortName>Poly-beta-1,6-GlcNAc synthase</shortName>
        <ecNumber>2.4.1.-</ecNumber>
    </recommendedName>
    <alternativeName>
        <fullName>Biofilm polysaccharide intercellular adhesin synthesis protein IcaA</fullName>
        <shortName>Biofilm PIA synthesis protein IcaA</shortName>
    </alternativeName>
    <alternativeName>
        <fullName>Intercellular adhesion protein A</fullName>
    </alternativeName>
    <alternativeName>
        <fullName>N-acetylglucosaminyltransferase IcaA</fullName>
    </alternativeName>
</protein>
<dbReference type="EC" id="2.4.1.-"/>
<dbReference type="EMBL" id="BX571856">
    <property type="protein sequence ID" value="CAG41723.1"/>
    <property type="molecule type" value="Genomic_DNA"/>
</dbReference>
<dbReference type="RefSeq" id="WP_001159430.1">
    <property type="nucleotide sequence ID" value="NC_002952.2"/>
</dbReference>
<dbReference type="SMR" id="Q6GDD8"/>
<dbReference type="CAZy" id="GT2">
    <property type="family name" value="Glycosyltransferase Family 2"/>
</dbReference>
<dbReference type="KEGG" id="sar:SAR2747"/>
<dbReference type="HOGENOM" id="CLU_023978_0_1_9"/>
<dbReference type="Proteomes" id="UP000000596">
    <property type="component" value="Chromosome"/>
</dbReference>
<dbReference type="GO" id="GO:0005886">
    <property type="term" value="C:plasma membrane"/>
    <property type="evidence" value="ECO:0007669"/>
    <property type="project" value="UniProtKB-SubCell"/>
</dbReference>
<dbReference type="GO" id="GO:0008375">
    <property type="term" value="F:acetylglucosaminyltransferase activity"/>
    <property type="evidence" value="ECO:0007669"/>
    <property type="project" value="InterPro"/>
</dbReference>
<dbReference type="GO" id="GO:0043708">
    <property type="term" value="P:cell adhesion involved in biofilm formation"/>
    <property type="evidence" value="ECO:0007669"/>
    <property type="project" value="InterPro"/>
</dbReference>
<dbReference type="CDD" id="cd06423">
    <property type="entry name" value="CESA_like"/>
    <property type="match status" value="1"/>
</dbReference>
<dbReference type="Gene3D" id="3.90.550.10">
    <property type="entry name" value="Spore Coat Polysaccharide Biosynthesis Protein SpsA, Chain A"/>
    <property type="match status" value="1"/>
</dbReference>
<dbReference type="InterPro" id="IPR001173">
    <property type="entry name" value="Glyco_trans_2-like"/>
</dbReference>
<dbReference type="InterPro" id="IPR029044">
    <property type="entry name" value="Nucleotide-diphossugar_trans"/>
</dbReference>
<dbReference type="InterPro" id="IPR023853">
    <property type="entry name" value="PGA_PgaC/IcaA"/>
</dbReference>
<dbReference type="NCBIfam" id="TIGR03937">
    <property type="entry name" value="PgaC_IcaA"/>
    <property type="match status" value="1"/>
</dbReference>
<dbReference type="PANTHER" id="PTHR43630">
    <property type="entry name" value="POLY-BETA-1,6-N-ACETYL-D-GLUCOSAMINE SYNTHASE"/>
    <property type="match status" value="1"/>
</dbReference>
<dbReference type="PANTHER" id="PTHR43630:SF1">
    <property type="entry name" value="POLY-BETA-1,6-N-ACETYL-D-GLUCOSAMINE SYNTHASE"/>
    <property type="match status" value="1"/>
</dbReference>
<dbReference type="Pfam" id="PF00535">
    <property type="entry name" value="Glycos_transf_2"/>
    <property type="match status" value="1"/>
</dbReference>
<dbReference type="SUPFAM" id="SSF53448">
    <property type="entry name" value="Nucleotide-diphospho-sugar transferases"/>
    <property type="match status" value="1"/>
</dbReference>
<feature type="chain" id="PRO_0000059279" description="Poly-beta-1,6-N-acetyl-D-glucosamine synthase">
    <location>
        <begin position="1"/>
        <end position="412"/>
    </location>
</feature>
<feature type="transmembrane region" description="Helical" evidence="2">
    <location>
        <begin position="6"/>
        <end position="28"/>
    </location>
</feature>
<feature type="transmembrane region" description="Helical" evidence="2">
    <location>
        <begin position="290"/>
        <end position="312"/>
    </location>
</feature>
<feature type="transmembrane region" description="Helical" evidence="2">
    <location>
        <begin position="332"/>
        <end position="354"/>
    </location>
</feature>
<feature type="transmembrane region" description="Helical" evidence="2">
    <location>
        <begin position="366"/>
        <end position="388"/>
    </location>
</feature>
<gene>
    <name type="primary">icaA</name>
    <name type="ordered locus">SAR2747</name>
</gene>
<name>ICAA_STAAR</name>
<keyword id="KW-1003">Cell membrane</keyword>
<keyword id="KW-0328">Glycosyltransferase</keyword>
<keyword id="KW-0472">Membrane</keyword>
<keyword id="KW-0808">Transferase</keyword>
<keyword id="KW-0812">Transmembrane</keyword>
<keyword id="KW-1133">Transmembrane helix</keyword>
<comment type="function">
    <text evidence="1">N-acetylglucosaminyltransferase that catalyzes the polymerization of single monomer units of UDP-N-acetylglucosamine to produce the linear homomer poly-beta-1,6-N-acetyl-D-glucosamine (PNAG, also referred to as PIA), a biofilm adhesin polysaccharide. Requires IcaD for full activity (By similarity).</text>
</comment>
<comment type="subcellular location">
    <subcellularLocation>
        <location evidence="1">Cell membrane</location>
        <topology evidence="1">Multi-pass membrane protein</topology>
    </subcellularLocation>
</comment>
<comment type="similarity">
    <text evidence="3">Belongs to the glycosyltransferase 2 family.</text>
</comment>
<sequence>MQFFNFLLFYPVFMSIYWIVGSIYFYFTREIRYSLNKKPDINVDELEGITFLLACYNESETIEDTLSNVLALKYEKKEIIIINDGSSDNTAELIYKIKENNDFIFVDLQENRGKANALNQGIKQASYDYVMCLDADTIVDQDAPYYMIENFKHDPKLGAVTGNPRIRNKSSILGKIQTIEYASLIGCIKRSQTLAGAVNTISGVFTLFKKSAVVDVGYWDTDMITEDIAVSWKLHLRGYRIKYEPLAMCWMLVPETLGGLWKQRVRWAQGGHEVLLRDFFSTMKTKRFPLYILMFEQIISILWVYIVLLYLGYLFITANFLDYTFMTYSFSIFLLSSFTMTFINVIQFTVALFIDSRYEKKNMAGLIFVSWYPTVYWIINAAVVLVAFPKALKRKKGGYATWSSPDRGNTQR</sequence>
<proteinExistence type="inferred from homology"/>